<protein>
    <recommendedName>
        <fullName>Aquaporin NIP3-1</fullName>
    </recommendedName>
    <alternativeName>
        <fullName>NOD26-like intrinsic protein 3-1</fullName>
    </alternativeName>
    <alternativeName>
        <fullName>ZmNIP3-1</fullName>
    </alternativeName>
    <alternativeName>
        <fullName>ZmNIP3;1</fullName>
    </alternativeName>
</protein>
<feature type="chain" id="PRO_0000286034" description="Aquaporin NIP3-1">
    <location>
        <begin position="1"/>
        <end position="302"/>
    </location>
</feature>
<feature type="transmembrane region" description="Helical; Name=1" evidence="2">
    <location>
        <begin position="76"/>
        <end position="96"/>
    </location>
</feature>
<feature type="transmembrane region" description="Helical; Name=2" evidence="2">
    <location>
        <begin position="102"/>
        <end position="122"/>
    </location>
</feature>
<feature type="transmembrane region" description="Helical; Name=3" evidence="2">
    <location>
        <begin position="149"/>
        <end position="169"/>
    </location>
</feature>
<feature type="transmembrane region" description="Helical; Name=4" evidence="2">
    <location>
        <begin position="193"/>
        <end position="213"/>
    </location>
</feature>
<feature type="transmembrane region" description="Helical; Name=5" evidence="2">
    <location>
        <begin position="217"/>
        <end position="237"/>
    </location>
</feature>
<feature type="transmembrane region" description="Helical; Name=6" evidence="2">
    <location>
        <begin position="264"/>
        <end position="284"/>
    </location>
</feature>
<feature type="region of interest" description="Disordered" evidence="3">
    <location>
        <begin position="1"/>
        <end position="31"/>
    </location>
</feature>
<feature type="short sequence motif" description="NPA 1" evidence="1">
    <location>
        <begin position="133"/>
        <end position="135"/>
    </location>
</feature>
<feature type="short sequence motif" description="NPA 2" evidence="1">
    <location>
        <begin position="246"/>
        <end position="248"/>
    </location>
</feature>
<feature type="compositionally biased region" description="Low complexity" evidence="3">
    <location>
        <begin position="7"/>
        <end position="21"/>
    </location>
</feature>
<sequence length="302" mass="31162">MEPGSTPPNGSAPATPGTPAPLFSSGGPRVDSLSYERKSMPRCKCLPLPAVEGWGVATHTCVVEIPAPDVSLTRKLGAEFVGTFILIFFATAAPIVNQKYGGAISPFGNAACAGLAVATVILSTGHISGAHLNPSLTIAFAALRHFPWLQVPAYVAVQALASVCAAFALKGVFHPFLSGGVTVPDATVSTAQAFFTEFIISFNLLFVVTAVATDTRAVGELAGIAVGAAVTLNILVAGPTTGGSMNPVRTLGPAVAAGNYRQLWIYLLAPTLGALAGASVYKAVKLRDENGETPRTQRSFRR</sequence>
<accession>Q9ATN1</accession>
<organism>
    <name type="scientific">Zea mays</name>
    <name type="common">Maize</name>
    <dbReference type="NCBI Taxonomy" id="4577"/>
    <lineage>
        <taxon>Eukaryota</taxon>
        <taxon>Viridiplantae</taxon>
        <taxon>Streptophyta</taxon>
        <taxon>Embryophyta</taxon>
        <taxon>Tracheophyta</taxon>
        <taxon>Spermatophyta</taxon>
        <taxon>Magnoliopsida</taxon>
        <taxon>Liliopsida</taxon>
        <taxon>Poales</taxon>
        <taxon>Poaceae</taxon>
        <taxon>PACMAD clade</taxon>
        <taxon>Panicoideae</taxon>
        <taxon>Andropogonodae</taxon>
        <taxon>Andropogoneae</taxon>
        <taxon>Tripsacinae</taxon>
        <taxon>Zea</taxon>
    </lineage>
</organism>
<gene>
    <name type="primary">NIP3-1</name>
    <name type="synonym">NIP3A</name>
</gene>
<reference key="1">
    <citation type="journal article" date="2001" name="Plant Physiol.">
        <title>Aquaporins constitute a large and highly divergent protein family in maize.</title>
        <authorList>
            <person name="Chaumont F."/>
            <person name="Barrieu F."/>
            <person name="Wojcik E."/>
            <person name="Chrispeels M.J."/>
            <person name="Jung R."/>
        </authorList>
    </citation>
    <scope>NUCLEOTIDE SEQUENCE [MRNA]</scope>
    <scope>GENE FAMILY</scope>
    <scope>NOMENCLATURE</scope>
    <source>
        <strain>cv. B73</strain>
    </source>
</reference>
<name>NIP31_MAIZE</name>
<comment type="function">
    <text evidence="1">Aquaporins facilitate the transport of water and small neutral solutes across cell membranes.</text>
</comment>
<comment type="subcellular location">
    <subcellularLocation>
        <location evidence="4">Membrane</location>
        <topology evidence="4">Multi-pass membrane protein</topology>
    </subcellularLocation>
</comment>
<comment type="domain">
    <text>Aquaporins contain two tandem repeats each containing three membrane-spanning domains and a pore-forming loop with the signature motif Asn-Pro-Ala (NPA).</text>
</comment>
<comment type="similarity">
    <text evidence="4">Belongs to the MIP/aquaporin (TC 1.A.8) family. NIP (TC 1.A.8.12) subfamily.</text>
</comment>
<dbReference type="EMBL" id="AF326486">
    <property type="protein sequence ID" value="AAK26753.1"/>
    <property type="molecule type" value="mRNA"/>
</dbReference>
<dbReference type="RefSeq" id="NP_001105021.1">
    <property type="nucleotide sequence ID" value="NM_001111551.1"/>
</dbReference>
<dbReference type="SMR" id="Q9ATN1"/>
<dbReference type="FunCoup" id="Q9ATN1">
    <property type="interactions" value="32"/>
</dbReference>
<dbReference type="STRING" id="4577.Q9ATN1"/>
<dbReference type="PaxDb" id="4577-GRMZM2G176209_P01"/>
<dbReference type="EnsemblPlants" id="Zm00001eb043650_T001">
    <property type="protein sequence ID" value="Zm00001eb043650_P001"/>
    <property type="gene ID" value="Zm00001eb043650"/>
</dbReference>
<dbReference type="GeneID" id="541885"/>
<dbReference type="Gramene" id="Zm00001eb043650_T001">
    <property type="protein sequence ID" value="Zm00001eb043650_P001"/>
    <property type="gene ID" value="Zm00001eb043650"/>
</dbReference>
<dbReference type="KEGG" id="zma:541885"/>
<dbReference type="MaizeGDB" id="403452"/>
<dbReference type="eggNOG" id="KOG0223">
    <property type="taxonomic scope" value="Eukaryota"/>
</dbReference>
<dbReference type="HOGENOM" id="CLU_020019_3_1_1"/>
<dbReference type="InParanoid" id="Q9ATN1"/>
<dbReference type="OMA" id="HSCFTDF"/>
<dbReference type="OrthoDB" id="3222at2759"/>
<dbReference type="Proteomes" id="UP000007305">
    <property type="component" value="Chromosome 1"/>
</dbReference>
<dbReference type="ExpressionAtlas" id="Q9ATN1">
    <property type="expression patterns" value="baseline and differential"/>
</dbReference>
<dbReference type="GO" id="GO:0016328">
    <property type="term" value="C:lateral plasma membrane"/>
    <property type="evidence" value="ECO:0007669"/>
    <property type="project" value="EnsemblPlants"/>
</dbReference>
<dbReference type="GO" id="GO:0046715">
    <property type="term" value="F:active borate transmembrane transporter activity"/>
    <property type="evidence" value="ECO:0007669"/>
    <property type="project" value="EnsemblPlants"/>
</dbReference>
<dbReference type="GO" id="GO:0015105">
    <property type="term" value="F:arsenite transmembrane transporter activity"/>
    <property type="evidence" value="ECO:0007669"/>
    <property type="project" value="EnsemblPlants"/>
</dbReference>
<dbReference type="GO" id="GO:0015250">
    <property type="term" value="F:water channel activity"/>
    <property type="evidence" value="ECO:0007669"/>
    <property type="project" value="EnsemblPlants"/>
</dbReference>
<dbReference type="GO" id="GO:0080029">
    <property type="term" value="P:cellular response to boron-containing substance levels"/>
    <property type="evidence" value="ECO:0007669"/>
    <property type="project" value="EnsemblPlants"/>
</dbReference>
<dbReference type="GO" id="GO:0046685">
    <property type="term" value="P:response to arsenic-containing substance"/>
    <property type="evidence" value="ECO:0007669"/>
    <property type="project" value="EnsemblPlants"/>
</dbReference>
<dbReference type="CDD" id="cd00333">
    <property type="entry name" value="MIP"/>
    <property type="match status" value="1"/>
</dbReference>
<dbReference type="FunFam" id="1.20.1080.10:FF:000013">
    <property type="entry name" value="Aquaporin NIP2-1"/>
    <property type="match status" value="1"/>
</dbReference>
<dbReference type="Gene3D" id="1.20.1080.10">
    <property type="entry name" value="Glycerol uptake facilitator protein"/>
    <property type="match status" value="1"/>
</dbReference>
<dbReference type="InterPro" id="IPR023271">
    <property type="entry name" value="Aquaporin-like"/>
</dbReference>
<dbReference type="InterPro" id="IPR034294">
    <property type="entry name" value="Aquaporin_transptr"/>
</dbReference>
<dbReference type="InterPro" id="IPR000425">
    <property type="entry name" value="MIP"/>
</dbReference>
<dbReference type="InterPro" id="IPR022357">
    <property type="entry name" value="MIP_CS"/>
</dbReference>
<dbReference type="PANTHER" id="PTHR45724">
    <property type="entry name" value="AQUAPORIN NIP2-1"/>
    <property type="match status" value="1"/>
</dbReference>
<dbReference type="PANTHER" id="PTHR45724:SF11">
    <property type="entry name" value="AQUAPORIN NIP5-1-RELATED"/>
    <property type="match status" value="1"/>
</dbReference>
<dbReference type="Pfam" id="PF00230">
    <property type="entry name" value="MIP"/>
    <property type="match status" value="1"/>
</dbReference>
<dbReference type="PRINTS" id="PR00783">
    <property type="entry name" value="MINTRINSICP"/>
</dbReference>
<dbReference type="SUPFAM" id="SSF81338">
    <property type="entry name" value="Aquaporin-like"/>
    <property type="match status" value="1"/>
</dbReference>
<dbReference type="PROSITE" id="PS00221">
    <property type="entry name" value="MIP"/>
    <property type="match status" value="1"/>
</dbReference>
<keyword id="KW-0472">Membrane</keyword>
<keyword id="KW-1185">Reference proteome</keyword>
<keyword id="KW-0677">Repeat</keyword>
<keyword id="KW-0812">Transmembrane</keyword>
<keyword id="KW-1133">Transmembrane helix</keyword>
<keyword id="KW-0813">Transport</keyword>
<evidence type="ECO:0000250" key="1"/>
<evidence type="ECO:0000255" key="2"/>
<evidence type="ECO:0000256" key="3">
    <source>
        <dbReference type="SAM" id="MobiDB-lite"/>
    </source>
</evidence>
<evidence type="ECO:0000305" key="4"/>
<proteinExistence type="evidence at transcript level"/>